<name>FDHD_XANOM</name>
<accession>Q2P241</accession>
<keyword id="KW-0963">Cytoplasm</keyword>
<keyword id="KW-0501">Molybdenum cofactor biosynthesis</keyword>
<gene>
    <name evidence="1" type="primary">fdhD</name>
    <name type="ordered locus">XOO2631</name>
</gene>
<proteinExistence type="inferred from homology"/>
<protein>
    <recommendedName>
        <fullName evidence="1">Sulfur carrier protein FdhD</fullName>
    </recommendedName>
</protein>
<dbReference type="EMBL" id="AP008229">
    <property type="protein sequence ID" value="BAE69386.1"/>
    <property type="molecule type" value="Genomic_DNA"/>
</dbReference>
<dbReference type="RefSeq" id="WP_011259382.1">
    <property type="nucleotide sequence ID" value="NC_007705.1"/>
</dbReference>
<dbReference type="SMR" id="Q2P241"/>
<dbReference type="KEGG" id="xom:XOO2631"/>
<dbReference type="HOGENOM" id="CLU_056887_2_0_6"/>
<dbReference type="GO" id="GO:0005737">
    <property type="term" value="C:cytoplasm"/>
    <property type="evidence" value="ECO:0007669"/>
    <property type="project" value="UniProtKB-SubCell"/>
</dbReference>
<dbReference type="GO" id="GO:0097163">
    <property type="term" value="F:sulfur carrier activity"/>
    <property type="evidence" value="ECO:0007669"/>
    <property type="project" value="UniProtKB-UniRule"/>
</dbReference>
<dbReference type="GO" id="GO:0016783">
    <property type="term" value="F:sulfurtransferase activity"/>
    <property type="evidence" value="ECO:0007669"/>
    <property type="project" value="InterPro"/>
</dbReference>
<dbReference type="GO" id="GO:0006777">
    <property type="term" value="P:Mo-molybdopterin cofactor biosynthetic process"/>
    <property type="evidence" value="ECO:0007669"/>
    <property type="project" value="UniProtKB-UniRule"/>
</dbReference>
<dbReference type="Gene3D" id="3.10.20.10">
    <property type="match status" value="1"/>
</dbReference>
<dbReference type="Gene3D" id="3.40.140.10">
    <property type="entry name" value="Cytidine Deaminase, domain 2"/>
    <property type="match status" value="1"/>
</dbReference>
<dbReference type="HAMAP" id="MF_00187">
    <property type="entry name" value="FdhD"/>
    <property type="match status" value="1"/>
</dbReference>
<dbReference type="InterPro" id="IPR016193">
    <property type="entry name" value="Cytidine_deaminase-like"/>
</dbReference>
<dbReference type="InterPro" id="IPR003786">
    <property type="entry name" value="FdhD"/>
</dbReference>
<dbReference type="NCBIfam" id="TIGR00129">
    <property type="entry name" value="fdhD_narQ"/>
    <property type="match status" value="1"/>
</dbReference>
<dbReference type="PANTHER" id="PTHR30592">
    <property type="entry name" value="FORMATE DEHYDROGENASE"/>
    <property type="match status" value="1"/>
</dbReference>
<dbReference type="PANTHER" id="PTHR30592:SF1">
    <property type="entry name" value="SULFUR CARRIER PROTEIN FDHD"/>
    <property type="match status" value="1"/>
</dbReference>
<dbReference type="Pfam" id="PF02634">
    <property type="entry name" value="FdhD-NarQ"/>
    <property type="match status" value="1"/>
</dbReference>
<dbReference type="PIRSF" id="PIRSF015626">
    <property type="entry name" value="FdhD"/>
    <property type="match status" value="1"/>
</dbReference>
<dbReference type="SUPFAM" id="SSF53927">
    <property type="entry name" value="Cytidine deaminase-like"/>
    <property type="match status" value="1"/>
</dbReference>
<sequence>MTNSSSRSVRAGSVVRTVCRHRGGRSAMVQDMVAAEMPVAFIYNGVQFAVMMATPEDLEDFALGFSLSEGIVDHAQDLRVIAVETFLEGASLQIDIPPERAAALDQRRRNLDGRSGCGVCGNESIEAVLRVPPVLNSSLQIDVDALAHALDALHARQPIAAQTGAVHAAGWADAQGNVQLVREDVGRHNALDKLIGALARARIDASQGFAVVTSRASYEMAMKATQARIPLLAAISAPTALAISLADSAGLTLIGFARNHDCVVYSHPQRLNLGVAVGETA</sequence>
<comment type="function">
    <text evidence="1">Required for formate dehydrogenase (FDH) activity. Acts as a sulfur carrier protein that transfers sulfur from IscS to the molybdenum cofactor prior to its insertion into FDH.</text>
</comment>
<comment type="subcellular location">
    <subcellularLocation>
        <location evidence="1">Cytoplasm</location>
    </subcellularLocation>
</comment>
<comment type="similarity">
    <text evidence="1">Belongs to the FdhD family.</text>
</comment>
<evidence type="ECO:0000255" key="1">
    <source>
        <dbReference type="HAMAP-Rule" id="MF_00187"/>
    </source>
</evidence>
<organism>
    <name type="scientific">Xanthomonas oryzae pv. oryzae (strain MAFF 311018)</name>
    <dbReference type="NCBI Taxonomy" id="342109"/>
    <lineage>
        <taxon>Bacteria</taxon>
        <taxon>Pseudomonadati</taxon>
        <taxon>Pseudomonadota</taxon>
        <taxon>Gammaproteobacteria</taxon>
        <taxon>Lysobacterales</taxon>
        <taxon>Lysobacteraceae</taxon>
        <taxon>Xanthomonas</taxon>
    </lineage>
</organism>
<reference key="1">
    <citation type="journal article" date="2005" name="Jpn. Agric. Res. Q.">
        <title>Genome sequence of Xanthomonas oryzae pv. oryzae suggests contribution of large numbers of effector genes and insertion sequences to its race diversity.</title>
        <authorList>
            <person name="Ochiai H."/>
            <person name="Inoue Y."/>
            <person name="Takeya M."/>
            <person name="Sasaki A."/>
            <person name="Kaku H."/>
        </authorList>
    </citation>
    <scope>NUCLEOTIDE SEQUENCE [LARGE SCALE GENOMIC DNA]</scope>
    <source>
        <strain>MAFF 311018</strain>
    </source>
</reference>
<feature type="chain" id="PRO_1000020829" description="Sulfur carrier protein FdhD">
    <location>
        <begin position="1"/>
        <end position="281"/>
    </location>
</feature>
<feature type="active site" description="Cysteine persulfide intermediate" evidence="1">
    <location>
        <position position="117"/>
    </location>
</feature>